<sequence length="146" mass="16871">MRALQFLLRVSPAFLLLVLCLQLEINKAEESIWKVIQMDLQMPTVAVANEEVTVKLGIQTELKECMVIKAYLRSNIQIDGPFNYRYTSCLCDDYPRTFYWDLVANRTATIAAVVDIIRELDICPEDRAVVPIKSNRYYVLHRLNVS</sequence>
<proteinExistence type="inferred from homology"/>
<dbReference type="EMBL" id="AB098478">
    <property type="protein sequence ID" value="BAD04926.1"/>
    <property type="molecule type" value="Genomic_DNA"/>
</dbReference>
<dbReference type="RefSeq" id="NP_001164587.1">
    <property type="nucleotide sequence ID" value="NM_001171116.1"/>
</dbReference>
<dbReference type="SMR" id="P60990"/>
<dbReference type="FunCoup" id="P60990">
    <property type="interactions" value="16"/>
</dbReference>
<dbReference type="STRING" id="9986.ENSOCUP00000005426"/>
<dbReference type="GlyCosmos" id="P60990">
    <property type="glycosylation" value="1 site, No reported glycans"/>
</dbReference>
<dbReference type="PaxDb" id="9986-ENSOCUP00000005426"/>
<dbReference type="Ensembl" id="ENSOCUT00000006274.3">
    <property type="protein sequence ID" value="ENSOCUP00000005426.3"/>
    <property type="gene ID" value="ENSOCUG00000006275.3"/>
</dbReference>
<dbReference type="GeneID" id="100328927"/>
<dbReference type="KEGG" id="ocu:100328927"/>
<dbReference type="CTD" id="5304"/>
<dbReference type="eggNOG" id="ENOG502T2PG">
    <property type="taxonomic scope" value="Eukaryota"/>
</dbReference>
<dbReference type="GeneTree" id="ENSGT00390000002099"/>
<dbReference type="InParanoid" id="P60990"/>
<dbReference type="OrthoDB" id="9835042at2759"/>
<dbReference type="Proteomes" id="UP000001811">
    <property type="component" value="Chromosome 7"/>
</dbReference>
<dbReference type="Bgee" id="ENSOCUG00000006275">
    <property type="expression patterns" value="Expressed in prefrontal cortex"/>
</dbReference>
<dbReference type="GO" id="GO:0005615">
    <property type="term" value="C:extracellular space"/>
    <property type="evidence" value="ECO:0007669"/>
    <property type="project" value="Ensembl"/>
</dbReference>
<dbReference type="GO" id="GO:0005634">
    <property type="term" value="C:nucleus"/>
    <property type="evidence" value="ECO:0007669"/>
    <property type="project" value="Ensembl"/>
</dbReference>
<dbReference type="GO" id="GO:0004190">
    <property type="term" value="F:aspartic-type endopeptidase activity"/>
    <property type="evidence" value="ECO:0007669"/>
    <property type="project" value="Ensembl"/>
</dbReference>
<dbReference type="GO" id="GO:0042802">
    <property type="term" value="F:identical protein binding"/>
    <property type="evidence" value="ECO:0007669"/>
    <property type="project" value="Ensembl"/>
</dbReference>
<dbReference type="GO" id="GO:0019864">
    <property type="term" value="F:IgG binding"/>
    <property type="evidence" value="ECO:0007669"/>
    <property type="project" value="Ensembl"/>
</dbReference>
<dbReference type="GO" id="GO:0001580">
    <property type="term" value="P:detection of chemical stimulus involved in sensory perception of bitter taste"/>
    <property type="evidence" value="ECO:0007669"/>
    <property type="project" value="Ensembl"/>
</dbReference>
<dbReference type="GO" id="GO:0070233">
    <property type="term" value="P:negative regulation of T cell apoptotic process"/>
    <property type="evidence" value="ECO:0007669"/>
    <property type="project" value="Ensembl"/>
</dbReference>
<dbReference type="GO" id="GO:0010628">
    <property type="term" value="P:positive regulation of gene expression"/>
    <property type="evidence" value="ECO:0007669"/>
    <property type="project" value="Ensembl"/>
</dbReference>
<dbReference type="GO" id="GO:0006508">
    <property type="term" value="P:proteolysis"/>
    <property type="evidence" value="ECO:0007669"/>
    <property type="project" value="Ensembl"/>
</dbReference>
<dbReference type="GO" id="GO:0002682">
    <property type="term" value="P:regulation of immune system process"/>
    <property type="evidence" value="ECO:0007669"/>
    <property type="project" value="TreeGrafter"/>
</dbReference>
<dbReference type="FunFam" id="2.60.40.10:FF:001572">
    <property type="entry name" value="Prolactin-inducible protein homolog"/>
    <property type="match status" value="1"/>
</dbReference>
<dbReference type="Gene3D" id="2.60.40.10">
    <property type="entry name" value="Immunoglobulins"/>
    <property type="match status" value="1"/>
</dbReference>
<dbReference type="InterPro" id="IPR013783">
    <property type="entry name" value="Ig-like_fold"/>
</dbReference>
<dbReference type="InterPro" id="IPR014756">
    <property type="entry name" value="Ig_E-set"/>
</dbReference>
<dbReference type="InterPro" id="IPR007990">
    <property type="entry name" value="PIP"/>
</dbReference>
<dbReference type="PANTHER" id="PTHR15096:SF5">
    <property type="entry name" value="PROLACTIN-INDUCIBLE PROTEIN"/>
    <property type="match status" value="1"/>
</dbReference>
<dbReference type="PANTHER" id="PTHR15096">
    <property type="entry name" value="PROLACTIN-INDUCIBLE PROTEIN/SEMINAL VESICLE ANTIGEN"/>
    <property type="match status" value="1"/>
</dbReference>
<dbReference type="Pfam" id="PF05326">
    <property type="entry name" value="SVA"/>
    <property type="match status" value="1"/>
</dbReference>
<dbReference type="PIRSF" id="PIRSF002572">
    <property type="entry name" value="PIP-GCDFP-15"/>
    <property type="match status" value="1"/>
</dbReference>
<dbReference type="SUPFAM" id="SSF81296">
    <property type="entry name" value="E set domains"/>
    <property type="match status" value="1"/>
</dbReference>
<gene>
    <name type="primary">PIP</name>
</gene>
<evidence type="ECO:0000250" key="1"/>
<evidence type="ECO:0000255" key="2"/>
<evidence type="ECO:0000305" key="3"/>
<accession>P60990</accession>
<feature type="signal peptide" evidence="1">
    <location>
        <begin position="1"/>
        <end position="28"/>
    </location>
</feature>
<feature type="chain" id="PRO_0000024292" description="Prolactin-inducible protein homolog">
    <location>
        <begin position="29"/>
        <end position="146"/>
    </location>
</feature>
<feature type="glycosylation site" description="N-linked (GlcNAc...) asparagine" evidence="2">
    <location>
        <position position="105"/>
    </location>
</feature>
<feature type="disulfide bond" evidence="1">
    <location>
        <begin position="65"/>
        <end position="91"/>
    </location>
</feature>
<feature type="disulfide bond" evidence="1">
    <location>
        <begin position="89"/>
        <end position="123"/>
    </location>
</feature>
<keyword id="KW-1015">Disulfide bond</keyword>
<keyword id="KW-0325">Glycoprotein</keyword>
<keyword id="KW-1185">Reference proteome</keyword>
<keyword id="KW-0964">Secreted</keyword>
<keyword id="KW-0732">Signal</keyword>
<protein>
    <recommendedName>
        <fullName>Prolactin-inducible protein homolog</fullName>
    </recommendedName>
    <alternativeName>
        <fullName>Prolactin-induced protein</fullName>
    </alternativeName>
</protein>
<organism>
    <name type="scientific">Oryctolagus cuniculus</name>
    <name type="common">Rabbit</name>
    <dbReference type="NCBI Taxonomy" id="9986"/>
    <lineage>
        <taxon>Eukaryota</taxon>
        <taxon>Metazoa</taxon>
        <taxon>Chordata</taxon>
        <taxon>Craniata</taxon>
        <taxon>Vertebrata</taxon>
        <taxon>Euteleostomi</taxon>
        <taxon>Mammalia</taxon>
        <taxon>Eutheria</taxon>
        <taxon>Euarchontoglires</taxon>
        <taxon>Glires</taxon>
        <taxon>Lagomorpha</taxon>
        <taxon>Leporidae</taxon>
        <taxon>Oryctolagus</taxon>
    </lineage>
</organism>
<name>PIP_RABIT</name>
<comment type="subunit">
    <text evidence="1">Monomer. Interacts with AZGP1 (By similarity).</text>
</comment>
<comment type="subcellular location">
    <subcellularLocation>
        <location>Secreted</location>
    </subcellularLocation>
</comment>
<comment type="similarity">
    <text evidence="3">Belongs to the PIP family.</text>
</comment>
<reference key="1">
    <citation type="journal article" date="2004" name="Gene">
        <title>Divergent evolution of the prolactin-inducible protein gene and related genes in the mouse genome.</title>
        <authorList>
            <person name="Osawa M."/>
            <person name="Horiuchi H."/>
            <person name="Tian W."/>
            <person name="Kaneko M."/>
        </authorList>
    </citation>
    <scope>NUCLEOTIDE SEQUENCE [GENOMIC DNA]</scope>
</reference>